<sequence length="309" mass="32832">MSPAMNADNPGAAATAVAAIAPALKAEILAEALPYIRKFHGKTIVVKYGGNAMTEEKLKHGFARDVILLKLVGMNPVVVHGGGPQIDEALKKVGKVGTFVQGMRVTDEETMEVVEWVLGGEVQQDIVMLINQYGGQAVGLTGKDGGLIRAKRLQMPDRENPGAFIDIGYVGDIEAINPAVVKALQDDAFIPVISPIGFSDDGQAYNINADVVAGKMAEILKAEKLVMMTNIPGVMDKKGNLLTDLSAREIEELFADGTISGGMLPKISSALDAAKSGVHSVHIIDGRIEHSLLLEILTEQAFGTMIRSH</sequence>
<accession>Q476X1</accession>
<proteinExistence type="inferred from homology"/>
<feature type="chain" id="PRO_0000264740" description="Acetylglutamate kinase">
    <location>
        <begin position="1"/>
        <end position="309"/>
    </location>
</feature>
<feature type="binding site" evidence="1">
    <location>
        <begin position="82"/>
        <end position="83"/>
    </location>
    <ligand>
        <name>substrate</name>
    </ligand>
</feature>
<feature type="binding site" evidence="1">
    <location>
        <position position="104"/>
    </location>
    <ligand>
        <name>substrate</name>
    </ligand>
</feature>
<feature type="binding site" evidence="1">
    <location>
        <position position="206"/>
    </location>
    <ligand>
        <name>substrate</name>
    </ligand>
</feature>
<feature type="site" description="Transition state stabilizer" evidence="1">
    <location>
        <position position="47"/>
    </location>
</feature>
<feature type="site" description="Transition state stabilizer" evidence="1">
    <location>
        <position position="266"/>
    </location>
</feature>
<organism>
    <name type="scientific">Cupriavidus pinatubonensis (strain JMP 134 / LMG 1197)</name>
    <name type="common">Cupriavidus necator (strain JMP 134)</name>
    <dbReference type="NCBI Taxonomy" id="264198"/>
    <lineage>
        <taxon>Bacteria</taxon>
        <taxon>Pseudomonadati</taxon>
        <taxon>Pseudomonadota</taxon>
        <taxon>Betaproteobacteria</taxon>
        <taxon>Burkholderiales</taxon>
        <taxon>Burkholderiaceae</taxon>
        <taxon>Cupriavidus</taxon>
    </lineage>
</organism>
<comment type="function">
    <text evidence="1">Catalyzes the ATP-dependent phosphorylation of N-acetyl-L-glutamate.</text>
</comment>
<comment type="catalytic activity">
    <reaction evidence="1">
        <text>N-acetyl-L-glutamate + ATP = N-acetyl-L-glutamyl 5-phosphate + ADP</text>
        <dbReference type="Rhea" id="RHEA:14629"/>
        <dbReference type="ChEBI" id="CHEBI:30616"/>
        <dbReference type="ChEBI" id="CHEBI:44337"/>
        <dbReference type="ChEBI" id="CHEBI:57936"/>
        <dbReference type="ChEBI" id="CHEBI:456216"/>
        <dbReference type="EC" id="2.7.2.8"/>
    </reaction>
</comment>
<comment type="pathway">
    <text evidence="1">Amino-acid biosynthesis; L-arginine biosynthesis; N(2)-acetyl-L-ornithine from L-glutamate: step 2/4.</text>
</comment>
<comment type="subcellular location">
    <subcellularLocation>
        <location evidence="1">Cytoplasm</location>
    </subcellularLocation>
</comment>
<comment type="similarity">
    <text evidence="1">Belongs to the acetylglutamate kinase family. ArgB subfamily.</text>
</comment>
<protein>
    <recommendedName>
        <fullName evidence="1">Acetylglutamate kinase</fullName>
        <ecNumber evidence="1">2.7.2.8</ecNumber>
    </recommendedName>
    <alternativeName>
        <fullName evidence="1">N-acetyl-L-glutamate 5-phosphotransferase</fullName>
    </alternativeName>
    <alternativeName>
        <fullName evidence="1">NAG kinase</fullName>
        <shortName evidence="1">NAGK</shortName>
    </alternativeName>
</protein>
<gene>
    <name evidence="1" type="primary">argB</name>
    <name type="ordered locus">Reut_A0180</name>
</gene>
<keyword id="KW-0028">Amino-acid biosynthesis</keyword>
<keyword id="KW-0055">Arginine biosynthesis</keyword>
<keyword id="KW-0067">ATP-binding</keyword>
<keyword id="KW-0963">Cytoplasm</keyword>
<keyword id="KW-0418">Kinase</keyword>
<keyword id="KW-0547">Nucleotide-binding</keyword>
<keyword id="KW-0808">Transferase</keyword>
<reference key="1">
    <citation type="journal article" date="2010" name="PLoS ONE">
        <title>The complete multipartite genome sequence of Cupriavidus necator JMP134, a versatile pollutant degrader.</title>
        <authorList>
            <person name="Lykidis A."/>
            <person name="Perez-Pantoja D."/>
            <person name="Ledger T."/>
            <person name="Mavromatis K."/>
            <person name="Anderson I.J."/>
            <person name="Ivanova N.N."/>
            <person name="Hooper S.D."/>
            <person name="Lapidus A."/>
            <person name="Lucas S."/>
            <person name="Gonzalez B."/>
            <person name="Kyrpides N.C."/>
        </authorList>
    </citation>
    <scope>NUCLEOTIDE SEQUENCE [LARGE SCALE GENOMIC DNA]</scope>
    <source>
        <strain>JMP134 / LMG 1197</strain>
    </source>
</reference>
<dbReference type="EC" id="2.7.2.8" evidence="1"/>
<dbReference type="EMBL" id="CP000090">
    <property type="protein sequence ID" value="AAZ59562.1"/>
    <property type="molecule type" value="Genomic_DNA"/>
</dbReference>
<dbReference type="SMR" id="Q476X1"/>
<dbReference type="STRING" id="264198.Reut_A0180"/>
<dbReference type="KEGG" id="reu:Reut_A0180"/>
<dbReference type="eggNOG" id="COG0548">
    <property type="taxonomic scope" value="Bacteria"/>
</dbReference>
<dbReference type="HOGENOM" id="CLU_053680_0_0_4"/>
<dbReference type="UniPathway" id="UPA00068">
    <property type="reaction ID" value="UER00107"/>
</dbReference>
<dbReference type="GO" id="GO:0005737">
    <property type="term" value="C:cytoplasm"/>
    <property type="evidence" value="ECO:0007669"/>
    <property type="project" value="UniProtKB-SubCell"/>
</dbReference>
<dbReference type="GO" id="GO:0003991">
    <property type="term" value="F:acetylglutamate kinase activity"/>
    <property type="evidence" value="ECO:0007669"/>
    <property type="project" value="UniProtKB-UniRule"/>
</dbReference>
<dbReference type="GO" id="GO:0005524">
    <property type="term" value="F:ATP binding"/>
    <property type="evidence" value="ECO:0007669"/>
    <property type="project" value="UniProtKB-UniRule"/>
</dbReference>
<dbReference type="GO" id="GO:0042450">
    <property type="term" value="P:arginine biosynthetic process via ornithine"/>
    <property type="evidence" value="ECO:0007669"/>
    <property type="project" value="UniProtKB-UniRule"/>
</dbReference>
<dbReference type="GO" id="GO:0006526">
    <property type="term" value="P:L-arginine biosynthetic process"/>
    <property type="evidence" value="ECO:0007669"/>
    <property type="project" value="UniProtKB-UniPathway"/>
</dbReference>
<dbReference type="CDD" id="cd04250">
    <property type="entry name" value="AAK_NAGK-C"/>
    <property type="match status" value="1"/>
</dbReference>
<dbReference type="FunFam" id="3.40.1160.10:FF:000004">
    <property type="entry name" value="Acetylglutamate kinase"/>
    <property type="match status" value="1"/>
</dbReference>
<dbReference type="Gene3D" id="3.40.1160.10">
    <property type="entry name" value="Acetylglutamate kinase-like"/>
    <property type="match status" value="1"/>
</dbReference>
<dbReference type="HAMAP" id="MF_00082">
    <property type="entry name" value="ArgB"/>
    <property type="match status" value="1"/>
</dbReference>
<dbReference type="InterPro" id="IPR036393">
    <property type="entry name" value="AceGlu_kinase-like_sf"/>
</dbReference>
<dbReference type="InterPro" id="IPR004662">
    <property type="entry name" value="AcgluKinase_fam"/>
</dbReference>
<dbReference type="InterPro" id="IPR037528">
    <property type="entry name" value="ArgB"/>
</dbReference>
<dbReference type="InterPro" id="IPR001048">
    <property type="entry name" value="Asp/Glu/Uridylate_kinase"/>
</dbReference>
<dbReference type="InterPro" id="IPR041727">
    <property type="entry name" value="NAGK-C"/>
</dbReference>
<dbReference type="NCBIfam" id="TIGR00761">
    <property type="entry name" value="argB"/>
    <property type="match status" value="1"/>
</dbReference>
<dbReference type="PANTHER" id="PTHR23342">
    <property type="entry name" value="N-ACETYLGLUTAMATE SYNTHASE"/>
    <property type="match status" value="1"/>
</dbReference>
<dbReference type="PANTHER" id="PTHR23342:SF0">
    <property type="entry name" value="N-ACETYLGLUTAMATE SYNTHASE, MITOCHONDRIAL"/>
    <property type="match status" value="1"/>
</dbReference>
<dbReference type="Pfam" id="PF00696">
    <property type="entry name" value="AA_kinase"/>
    <property type="match status" value="1"/>
</dbReference>
<dbReference type="SUPFAM" id="SSF53633">
    <property type="entry name" value="Carbamate kinase-like"/>
    <property type="match status" value="1"/>
</dbReference>
<evidence type="ECO:0000255" key="1">
    <source>
        <dbReference type="HAMAP-Rule" id="MF_00082"/>
    </source>
</evidence>
<name>ARGB_CUPPJ</name>